<keyword id="KW-0687">Ribonucleoprotein</keyword>
<keyword id="KW-0689">Ribosomal protein</keyword>
<keyword id="KW-0694">RNA-binding</keyword>
<keyword id="KW-0699">rRNA-binding</keyword>
<comment type="function">
    <text evidence="1">One of the primary rRNA binding proteins, it binds specifically to the 5'-end of 16S ribosomal RNA.</text>
</comment>
<comment type="subunit">
    <text evidence="1">Part of the 30S ribosomal subunit.</text>
</comment>
<comment type="similarity">
    <text evidence="1">Belongs to the universal ribosomal protein uS17 family.</text>
</comment>
<organism>
    <name type="scientific">Bacillus thuringiensis (strain Al Hakam)</name>
    <dbReference type="NCBI Taxonomy" id="412694"/>
    <lineage>
        <taxon>Bacteria</taxon>
        <taxon>Bacillati</taxon>
        <taxon>Bacillota</taxon>
        <taxon>Bacilli</taxon>
        <taxon>Bacillales</taxon>
        <taxon>Bacillaceae</taxon>
        <taxon>Bacillus</taxon>
        <taxon>Bacillus cereus group</taxon>
    </lineage>
</organism>
<sequence length="87" mass="10189">MSERNQRKVYTGRVVSDKMDKTITVLVETYKTHSLYGKRVKYSKKYKAHDEQNQAKLGDIVKIMETRPLSATKRFRLVEIVEEAVII</sequence>
<protein>
    <recommendedName>
        <fullName evidence="1">Small ribosomal subunit protein uS17</fullName>
    </recommendedName>
    <alternativeName>
        <fullName evidence="2">30S ribosomal protein S17</fullName>
    </alternativeName>
</protein>
<gene>
    <name evidence="1" type="primary">rpsQ</name>
    <name type="ordered locus">BALH_0117</name>
</gene>
<accession>A0R8I9</accession>
<name>RS17_BACAH</name>
<reference key="1">
    <citation type="journal article" date="2007" name="J. Bacteriol.">
        <title>The complete genome sequence of Bacillus thuringiensis Al Hakam.</title>
        <authorList>
            <person name="Challacombe J.F."/>
            <person name="Altherr M.R."/>
            <person name="Xie G."/>
            <person name="Bhotika S.S."/>
            <person name="Brown N."/>
            <person name="Bruce D."/>
            <person name="Campbell C.S."/>
            <person name="Campbell M.L."/>
            <person name="Chen J."/>
            <person name="Chertkov O."/>
            <person name="Cleland C."/>
            <person name="Dimitrijevic M."/>
            <person name="Doggett N.A."/>
            <person name="Fawcett J.J."/>
            <person name="Glavina T."/>
            <person name="Goodwin L.A."/>
            <person name="Green L.D."/>
            <person name="Han C.S."/>
            <person name="Hill K.K."/>
            <person name="Hitchcock P."/>
            <person name="Jackson P.J."/>
            <person name="Keim P."/>
            <person name="Kewalramani A.R."/>
            <person name="Longmire J."/>
            <person name="Lucas S."/>
            <person name="Malfatti S."/>
            <person name="Martinez D."/>
            <person name="McMurry K."/>
            <person name="Meincke L.J."/>
            <person name="Misra M."/>
            <person name="Moseman B.L."/>
            <person name="Mundt M."/>
            <person name="Munk A.C."/>
            <person name="Okinaka R.T."/>
            <person name="Parson-Quintana B."/>
            <person name="Reilly L.P."/>
            <person name="Richardson P."/>
            <person name="Robinson D.L."/>
            <person name="Saunders E."/>
            <person name="Tapia R."/>
            <person name="Tesmer J.G."/>
            <person name="Thayer N."/>
            <person name="Thompson L.S."/>
            <person name="Tice H."/>
            <person name="Ticknor L.O."/>
            <person name="Wills P.L."/>
            <person name="Gilna P."/>
            <person name="Brettin T.S."/>
        </authorList>
    </citation>
    <scope>NUCLEOTIDE SEQUENCE [LARGE SCALE GENOMIC DNA]</scope>
    <source>
        <strain>Al Hakam</strain>
    </source>
</reference>
<proteinExistence type="inferred from homology"/>
<feature type="chain" id="PRO_1000054916" description="Small ribosomal subunit protein uS17">
    <location>
        <begin position="1"/>
        <end position="87"/>
    </location>
</feature>
<evidence type="ECO:0000255" key="1">
    <source>
        <dbReference type="HAMAP-Rule" id="MF_01345"/>
    </source>
</evidence>
<evidence type="ECO:0000305" key="2"/>
<dbReference type="EMBL" id="CP000485">
    <property type="protein sequence ID" value="ABK83532.1"/>
    <property type="molecule type" value="Genomic_DNA"/>
</dbReference>
<dbReference type="RefSeq" id="WP_000004106.1">
    <property type="nucleotide sequence ID" value="NC_008600.1"/>
</dbReference>
<dbReference type="SMR" id="A0R8I9"/>
<dbReference type="GeneID" id="93010934"/>
<dbReference type="KEGG" id="btl:BALH_0117"/>
<dbReference type="HOGENOM" id="CLU_073626_1_0_9"/>
<dbReference type="GO" id="GO:0022627">
    <property type="term" value="C:cytosolic small ribosomal subunit"/>
    <property type="evidence" value="ECO:0007669"/>
    <property type="project" value="TreeGrafter"/>
</dbReference>
<dbReference type="GO" id="GO:0019843">
    <property type="term" value="F:rRNA binding"/>
    <property type="evidence" value="ECO:0007669"/>
    <property type="project" value="UniProtKB-UniRule"/>
</dbReference>
<dbReference type="GO" id="GO:0003735">
    <property type="term" value="F:structural constituent of ribosome"/>
    <property type="evidence" value="ECO:0007669"/>
    <property type="project" value="InterPro"/>
</dbReference>
<dbReference type="GO" id="GO:0006412">
    <property type="term" value="P:translation"/>
    <property type="evidence" value="ECO:0007669"/>
    <property type="project" value="UniProtKB-UniRule"/>
</dbReference>
<dbReference type="CDD" id="cd00364">
    <property type="entry name" value="Ribosomal_uS17"/>
    <property type="match status" value="1"/>
</dbReference>
<dbReference type="FunFam" id="2.40.50.140:FF:000026">
    <property type="entry name" value="30S ribosomal protein S17"/>
    <property type="match status" value="1"/>
</dbReference>
<dbReference type="Gene3D" id="2.40.50.140">
    <property type="entry name" value="Nucleic acid-binding proteins"/>
    <property type="match status" value="1"/>
</dbReference>
<dbReference type="HAMAP" id="MF_01345_B">
    <property type="entry name" value="Ribosomal_uS17_B"/>
    <property type="match status" value="1"/>
</dbReference>
<dbReference type="InterPro" id="IPR012340">
    <property type="entry name" value="NA-bd_OB-fold"/>
</dbReference>
<dbReference type="InterPro" id="IPR000266">
    <property type="entry name" value="Ribosomal_uS17"/>
</dbReference>
<dbReference type="InterPro" id="IPR019984">
    <property type="entry name" value="Ribosomal_uS17_bact/chlr"/>
</dbReference>
<dbReference type="InterPro" id="IPR019979">
    <property type="entry name" value="Ribosomal_uS17_CS"/>
</dbReference>
<dbReference type="NCBIfam" id="NF004123">
    <property type="entry name" value="PRK05610.1"/>
    <property type="match status" value="1"/>
</dbReference>
<dbReference type="NCBIfam" id="TIGR03635">
    <property type="entry name" value="uS17_bact"/>
    <property type="match status" value="1"/>
</dbReference>
<dbReference type="PANTHER" id="PTHR10744">
    <property type="entry name" value="40S RIBOSOMAL PROTEIN S11 FAMILY MEMBER"/>
    <property type="match status" value="1"/>
</dbReference>
<dbReference type="PANTHER" id="PTHR10744:SF1">
    <property type="entry name" value="SMALL RIBOSOMAL SUBUNIT PROTEIN US17M"/>
    <property type="match status" value="1"/>
</dbReference>
<dbReference type="Pfam" id="PF00366">
    <property type="entry name" value="Ribosomal_S17"/>
    <property type="match status" value="1"/>
</dbReference>
<dbReference type="PRINTS" id="PR00973">
    <property type="entry name" value="RIBOSOMALS17"/>
</dbReference>
<dbReference type="SUPFAM" id="SSF50249">
    <property type="entry name" value="Nucleic acid-binding proteins"/>
    <property type="match status" value="1"/>
</dbReference>
<dbReference type="PROSITE" id="PS00056">
    <property type="entry name" value="RIBOSOMAL_S17"/>
    <property type="match status" value="1"/>
</dbReference>